<dbReference type="EC" id="4.1.1.31" evidence="1"/>
<dbReference type="EMBL" id="BX569694">
    <property type="protein sequence ID" value="CAE08562.1"/>
    <property type="molecule type" value="Genomic_DNA"/>
</dbReference>
<dbReference type="RefSeq" id="WP_011128905.1">
    <property type="nucleotide sequence ID" value="NC_005070.1"/>
</dbReference>
<dbReference type="SMR" id="Q7U4M0"/>
<dbReference type="STRING" id="84588.SYNW2047"/>
<dbReference type="KEGG" id="syw:SYNW2047"/>
<dbReference type="eggNOG" id="COG2352">
    <property type="taxonomic scope" value="Bacteria"/>
</dbReference>
<dbReference type="HOGENOM" id="CLU_006557_2_0_3"/>
<dbReference type="Proteomes" id="UP000001422">
    <property type="component" value="Chromosome"/>
</dbReference>
<dbReference type="GO" id="GO:0005829">
    <property type="term" value="C:cytosol"/>
    <property type="evidence" value="ECO:0007669"/>
    <property type="project" value="TreeGrafter"/>
</dbReference>
<dbReference type="GO" id="GO:0000287">
    <property type="term" value="F:magnesium ion binding"/>
    <property type="evidence" value="ECO:0007669"/>
    <property type="project" value="UniProtKB-UniRule"/>
</dbReference>
<dbReference type="GO" id="GO:0008964">
    <property type="term" value="F:phosphoenolpyruvate carboxylase activity"/>
    <property type="evidence" value="ECO:0007669"/>
    <property type="project" value="UniProtKB-UniRule"/>
</dbReference>
<dbReference type="GO" id="GO:0015977">
    <property type="term" value="P:carbon fixation"/>
    <property type="evidence" value="ECO:0007669"/>
    <property type="project" value="UniProtKB-UniRule"/>
</dbReference>
<dbReference type="GO" id="GO:0006107">
    <property type="term" value="P:oxaloacetate metabolic process"/>
    <property type="evidence" value="ECO:0007669"/>
    <property type="project" value="UniProtKB-UniRule"/>
</dbReference>
<dbReference type="GO" id="GO:0006099">
    <property type="term" value="P:tricarboxylic acid cycle"/>
    <property type="evidence" value="ECO:0007669"/>
    <property type="project" value="InterPro"/>
</dbReference>
<dbReference type="Gene3D" id="1.20.1440.90">
    <property type="entry name" value="Phosphoenolpyruvate/pyruvate domain"/>
    <property type="match status" value="1"/>
</dbReference>
<dbReference type="HAMAP" id="MF_00595">
    <property type="entry name" value="PEPcase_type1"/>
    <property type="match status" value="1"/>
</dbReference>
<dbReference type="InterPro" id="IPR021135">
    <property type="entry name" value="PEP_COase"/>
</dbReference>
<dbReference type="InterPro" id="IPR022805">
    <property type="entry name" value="PEP_COase_bac/pln-type"/>
</dbReference>
<dbReference type="InterPro" id="IPR018129">
    <property type="entry name" value="PEP_COase_Lys_AS"/>
</dbReference>
<dbReference type="InterPro" id="IPR033129">
    <property type="entry name" value="PEPCASE_His_AS"/>
</dbReference>
<dbReference type="InterPro" id="IPR015813">
    <property type="entry name" value="Pyrv/PenolPyrv_kinase-like_dom"/>
</dbReference>
<dbReference type="NCBIfam" id="NF000584">
    <property type="entry name" value="PRK00009.1"/>
    <property type="match status" value="1"/>
</dbReference>
<dbReference type="PANTHER" id="PTHR30523">
    <property type="entry name" value="PHOSPHOENOLPYRUVATE CARBOXYLASE"/>
    <property type="match status" value="1"/>
</dbReference>
<dbReference type="PANTHER" id="PTHR30523:SF6">
    <property type="entry name" value="PHOSPHOENOLPYRUVATE CARBOXYLASE"/>
    <property type="match status" value="1"/>
</dbReference>
<dbReference type="Pfam" id="PF00311">
    <property type="entry name" value="PEPcase"/>
    <property type="match status" value="1"/>
</dbReference>
<dbReference type="PRINTS" id="PR00150">
    <property type="entry name" value="PEPCARBXLASE"/>
</dbReference>
<dbReference type="SUPFAM" id="SSF51621">
    <property type="entry name" value="Phosphoenolpyruvate/pyruvate domain"/>
    <property type="match status" value="1"/>
</dbReference>
<dbReference type="PROSITE" id="PS00781">
    <property type="entry name" value="PEPCASE_1"/>
    <property type="match status" value="1"/>
</dbReference>
<dbReference type="PROSITE" id="PS00393">
    <property type="entry name" value="PEPCASE_2"/>
    <property type="match status" value="1"/>
</dbReference>
<sequence>MIMRSPETSGASMPQSTAHVPDGEQPRASGGSPGAGRLLQHRLELVEDLWQTVLRSECPPEQSERLLRLKQLSDPVALEGRDGESSSEAIVELIRSMDLSEAIAAARAFSLYFQLINILEQRIEEDSYLDSLRPSRSQDDETAAPFDPFAPPLASQTDPATFGEVFERLRRMNVPPAQVETLLRELDIRLVFTAHPTEIVRHTVRHKQRKVASLLQRLQSEPALPRYDEEELRRQLEEEIRLWWRTDELHQFKPTVLDEVDSTLHYFQQVLFEAMPQLRRRLVSSLSRHYPDVQFPQASFCTFGSWVGSDRDGNPSVTPEITWRTACYQRQLMLELYIGSVQSLRNQLSISMQWSQVAPPLLESLEMDRLRFPEIYERRAARYRLEPYRLKLSYILERLELTLQRNHQMSEAGWQSPPEPAATAPTDGIPGHEALHYTAIDQFRSDLELIRNSLVSTELSCEQLDTLLNQVHIFGFSLASLDIRQESTRHSDAIDELTTHLQLPKAYGAMEESERVAWLLEELQTRRPLIPAAVEWSEATAQTFAVFQMLHRLQQEFGQRICHSYVISMSHTASDLLEVMLLAKEIGLVDPQAGKASLLVVPLFETVEDLQRAPAVMDGLFQTPIYRNLLPSVGVQRQPLQELMLGYSDSNKDSGFLSSNWEIHQAQIALQTLASSHGVALRLFHGRGGSVSRGGGPAYQAILAQPSGTLQGRIKITEQGEVLASKYGLPELALYNLETVTTAVVQNSLVTNQLDATPSWNQLMSRVAKRSREHYRALVHDNPDLVAFFQQVTPIEEISKLQISSRPARRKTGARDLSSLRAIPWVFGWTQSRFLLPSWFGVGTALAEEVNDDPEQLDLLRRLHQRWPFFRMLISKVEMTLSKVDLDLAHHYMSSLGNPEQRDAFEGIFKVIADEYGRTLKLVLEITGQSRLLGADQNLQLSVDLRNRTIVPLGFLQVALLRRLRDQNRQPPMSESPGTPEDRRTYSRSELLRGALLTLNGIAAGMRNTG</sequence>
<evidence type="ECO:0000255" key="1">
    <source>
        <dbReference type="HAMAP-Rule" id="MF_00595"/>
    </source>
</evidence>
<evidence type="ECO:0000256" key="2">
    <source>
        <dbReference type="SAM" id="MobiDB-lite"/>
    </source>
</evidence>
<feature type="chain" id="PRO_0000166639" description="Phosphoenolpyruvate carboxylase">
    <location>
        <begin position="1"/>
        <end position="1010"/>
    </location>
</feature>
<feature type="region of interest" description="Disordered" evidence="2">
    <location>
        <begin position="1"/>
        <end position="36"/>
    </location>
</feature>
<feature type="region of interest" description="Disordered" evidence="2">
    <location>
        <begin position="132"/>
        <end position="154"/>
    </location>
</feature>
<feature type="region of interest" description="Disordered" evidence="2">
    <location>
        <begin position="967"/>
        <end position="986"/>
    </location>
</feature>
<feature type="compositionally biased region" description="Polar residues" evidence="2">
    <location>
        <begin position="1"/>
        <end position="18"/>
    </location>
</feature>
<feature type="active site" evidence="1">
    <location>
        <position position="195"/>
    </location>
</feature>
<feature type="active site" evidence="1">
    <location>
        <position position="652"/>
    </location>
</feature>
<comment type="function">
    <text evidence="1">Forms oxaloacetate, a four-carbon dicarboxylic acid source for the tricarboxylic acid cycle.</text>
</comment>
<comment type="catalytic activity">
    <reaction evidence="1">
        <text>oxaloacetate + phosphate = phosphoenolpyruvate + hydrogencarbonate</text>
        <dbReference type="Rhea" id="RHEA:28370"/>
        <dbReference type="ChEBI" id="CHEBI:16452"/>
        <dbReference type="ChEBI" id="CHEBI:17544"/>
        <dbReference type="ChEBI" id="CHEBI:43474"/>
        <dbReference type="ChEBI" id="CHEBI:58702"/>
        <dbReference type="EC" id="4.1.1.31"/>
    </reaction>
</comment>
<comment type="cofactor">
    <cofactor evidence="1">
        <name>Mg(2+)</name>
        <dbReference type="ChEBI" id="CHEBI:18420"/>
    </cofactor>
</comment>
<comment type="similarity">
    <text evidence="1">Belongs to the PEPCase type 1 family.</text>
</comment>
<name>CAPP_PARMW</name>
<accession>Q7U4M0</accession>
<protein>
    <recommendedName>
        <fullName evidence="1">Phosphoenolpyruvate carboxylase</fullName>
        <shortName evidence="1">PEPC</shortName>
        <shortName evidence="1">PEPCase</shortName>
        <ecNumber evidence="1">4.1.1.31</ecNumber>
    </recommendedName>
</protein>
<organism>
    <name type="scientific">Parasynechococcus marenigrum (strain WH8102)</name>
    <dbReference type="NCBI Taxonomy" id="84588"/>
    <lineage>
        <taxon>Bacteria</taxon>
        <taxon>Bacillati</taxon>
        <taxon>Cyanobacteriota</taxon>
        <taxon>Cyanophyceae</taxon>
        <taxon>Synechococcales</taxon>
        <taxon>Prochlorococcaceae</taxon>
        <taxon>Parasynechococcus</taxon>
        <taxon>Parasynechococcus marenigrum</taxon>
    </lineage>
</organism>
<keyword id="KW-0120">Carbon dioxide fixation</keyword>
<keyword id="KW-0456">Lyase</keyword>
<keyword id="KW-0460">Magnesium</keyword>
<gene>
    <name evidence="1" type="primary">ppc</name>
    <name type="ordered locus">SYNW2047</name>
</gene>
<reference key="1">
    <citation type="journal article" date="2003" name="Nature">
        <title>The genome of a motile marine Synechococcus.</title>
        <authorList>
            <person name="Palenik B."/>
            <person name="Brahamsha B."/>
            <person name="Larimer F.W."/>
            <person name="Land M.L."/>
            <person name="Hauser L."/>
            <person name="Chain P."/>
            <person name="Lamerdin J.E."/>
            <person name="Regala W."/>
            <person name="Allen E.E."/>
            <person name="McCarren J."/>
            <person name="Paulsen I.T."/>
            <person name="Dufresne A."/>
            <person name="Partensky F."/>
            <person name="Webb E.A."/>
            <person name="Waterbury J."/>
        </authorList>
    </citation>
    <scope>NUCLEOTIDE SEQUENCE [LARGE SCALE GENOMIC DNA]</scope>
    <source>
        <strain>WH8102</strain>
    </source>
</reference>
<proteinExistence type="inferred from homology"/>